<proteinExistence type="evidence at protein level"/>
<gene>
    <name type="primary">ISOC2</name>
</gene>
<dbReference type="EMBL" id="AK027122">
    <property type="protein sequence ID" value="BAB15666.1"/>
    <property type="molecule type" value="mRNA"/>
</dbReference>
<dbReference type="EMBL" id="AK131324">
    <property type="protein sequence ID" value="BAD18484.2"/>
    <property type="molecule type" value="mRNA"/>
</dbReference>
<dbReference type="EMBL" id="CR457377">
    <property type="protein sequence ID" value="CAG33658.1"/>
    <property type="molecule type" value="mRNA"/>
</dbReference>
<dbReference type="EMBL" id="CH471135">
    <property type="protein sequence ID" value="EAW72379.1"/>
    <property type="molecule type" value="Genomic_DNA"/>
</dbReference>
<dbReference type="EMBL" id="BC017344">
    <property type="protein sequence ID" value="AAH17344.1"/>
    <property type="molecule type" value="mRNA"/>
</dbReference>
<dbReference type="CCDS" id="CCDS12925.1">
    <molecule id="Q96AB3-2"/>
</dbReference>
<dbReference type="CCDS" id="CCDS46194.1">
    <molecule id="Q96AB3-3"/>
</dbReference>
<dbReference type="CCDS" id="CCDS46195.1">
    <molecule id="Q96AB3-1"/>
</dbReference>
<dbReference type="RefSeq" id="NP_001129673.1">
    <molecule id="Q96AB3-1"/>
    <property type="nucleotide sequence ID" value="NM_001136201.2"/>
</dbReference>
<dbReference type="RefSeq" id="NP_001129674.1">
    <molecule id="Q96AB3-3"/>
    <property type="nucleotide sequence ID" value="NM_001136202.2"/>
</dbReference>
<dbReference type="RefSeq" id="NP_078986.1">
    <molecule id="Q96AB3-2"/>
    <property type="nucleotide sequence ID" value="NM_024710.3"/>
</dbReference>
<dbReference type="SMR" id="Q96AB3"/>
<dbReference type="BioGRID" id="122871">
    <property type="interactions" value="72"/>
</dbReference>
<dbReference type="FunCoup" id="Q96AB3">
    <property type="interactions" value="1442"/>
</dbReference>
<dbReference type="IntAct" id="Q96AB3">
    <property type="interactions" value="29"/>
</dbReference>
<dbReference type="MINT" id="Q96AB3"/>
<dbReference type="STRING" id="9606.ENSP00000085068"/>
<dbReference type="GlyGen" id="Q96AB3">
    <property type="glycosylation" value="1 site"/>
</dbReference>
<dbReference type="iPTMnet" id="Q96AB3"/>
<dbReference type="PhosphoSitePlus" id="Q96AB3"/>
<dbReference type="SwissPalm" id="Q96AB3"/>
<dbReference type="BioMuta" id="ISOC2"/>
<dbReference type="DMDM" id="74731104"/>
<dbReference type="jPOST" id="Q96AB3"/>
<dbReference type="MassIVE" id="Q96AB3"/>
<dbReference type="PaxDb" id="9606-ENSP00000085068"/>
<dbReference type="PeptideAtlas" id="Q96AB3"/>
<dbReference type="ProteomicsDB" id="75945">
    <molecule id="Q96AB3-1"/>
</dbReference>
<dbReference type="ProteomicsDB" id="75946">
    <molecule id="Q96AB3-2"/>
</dbReference>
<dbReference type="ProteomicsDB" id="75947">
    <molecule id="Q96AB3-3"/>
</dbReference>
<dbReference type="Pumba" id="Q96AB3"/>
<dbReference type="TopDownProteomics" id="Q96AB3-1">
    <molecule id="Q96AB3-1"/>
</dbReference>
<dbReference type="TopDownProteomics" id="Q96AB3-2">
    <molecule id="Q96AB3-2"/>
</dbReference>
<dbReference type="Antibodypedia" id="33099">
    <property type="antibodies" value="88 antibodies from 16 providers"/>
</dbReference>
<dbReference type="DNASU" id="79763"/>
<dbReference type="Ensembl" id="ENST00000085068.7">
    <molecule id="Q96AB3-2"/>
    <property type="protein sequence ID" value="ENSP00000085068.2"/>
    <property type="gene ID" value="ENSG00000063241.8"/>
</dbReference>
<dbReference type="Ensembl" id="ENST00000425675.7">
    <molecule id="Q96AB3-1"/>
    <property type="protein sequence ID" value="ENSP00000401726.1"/>
    <property type="gene ID" value="ENSG00000063241.8"/>
</dbReference>
<dbReference type="Ensembl" id="ENST00000438389.6">
    <molecule id="Q96AB3-3"/>
    <property type="protein sequence ID" value="ENSP00000406364.1"/>
    <property type="gene ID" value="ENSG00000063241.8"/>
</dbReference>
<dbReference type="GeneID" id="79763"/>
<dbReference type="KEGG" id="hsa:79763"/>
<dbReference type="MANE-Select" id="ENST00000425675.7">
    <property type="protein sequence ID" value="ENSP00000401726.1"/>
    <property type="RefSeq nucleotide sequence ID" value="NM_001136201.2"/>
    <property type="RefSeq protein sequence ID" value="NP_001129673.1"/>
</dbReference>
<dbReference type="UCSC" id="uc002qla.4">
    <molecule id="Q96AB3-1"/>
    <property type="organism name" value="human"/>
</dbReference>
<dbReference type="AGR" id="HGNC:26278"/>
<dbReference type="CTD" id="79763"/>
<dbReference type="GeneCards" id="ISOC2"/>
<dbReference type="HGNC" id="HGNC:26278">
    <property type="gene designation" value="ISOC2"/>
</dbReference>
<dbReference type="HPA" id="ENSG00000063241">
    <property type="expression patterns" value="Tissue enhanced (liver)"/>
</dbReference>
<dbReference type="MIM" id="612928">
    <property type="type" value="gene"/>
</dbReference>
<dbReference type="neXtProt" id="NX_Q96AB3"/>
<dbReference type="OpenTargets" id="ENSG00000063241"/>
<dbReference type="PharmGKB" id="PA134981722"/>
<dbReference type="VEuPathDB" id="HostDB:ENSG00000063241"/>
<dbReference type="eggNOG" id="KOG4044">
    <property type="taxonomic scope" value="Eukaryota"/>
</dbReference>
<dbReference type="GeneTree" id="ENSGT00390000006753"/>
<dbReference type="HOGENOM" id="CLU_1885003_0_0_1"/>
<dbReference type="InParanoid" id="Q96AB3"/>
<dbReference type="OMA" id="HVCVFQT"/>
<dbReference type="OrthoDB" id="269496at2759"/>
<dbReference type="PAN-GO" id="Q96AB3">
    <property type="GO annotations" value="1 GO annotation based on evolutionary models"/>
</dbReference>
<dbReference type="PhylomeDB" id="Q96AB3"/>
<dbReference type="TreeFam" id="TF313459"/>
<dbReference type="PathwayCommons" id="Q96AB3"/>
<dbReference type="SignaLink" id="Q96AB3"/>
<dbReference type="BioGRID-ORCS" id="79763">
    <property type="hits" value="12 hits in 1161 CRISPR screens"/>
</dbReference>
<dbReference type="GenomeRNAi" id="79763"/>
<dbReference type="Pharos" id="Q96AB3">
    <property type="development level" value="Tbio"/>
</dbReference>
<dbReference type="PRO" id="PR:Q96AB3"/>
<dbReference type="Proteomes" id="UP000005640">
    <property type="component" value="Chromosome 19"/>
</dbReference>
<dbReference type="RNAct" id="Q96AB3">
    <property type="molecule type" value="protein"/>
</dbReference>
<dbReference type="Bgee" id="ENSG00000063241">
    <property type="expression patterns" value="Expressed in right lobe of liver and 146 other cell types or tissues"/>
</dbReference>
<dbReference type="ExpressionAtlas" id="Q96AB3">
    <property type="expression patterns" value="baseline and differential"/>
</dbReference>
<dbReference type="GO" id="GO:0005737">
    <property type="term" value="C:cytoplasm"/>
    <property type="evidence" value="ECO:0000314"/>
    <property type="project" value="BHF-UCL"/>
</dbReference>
<dbReference type="GO" id="GO:0005739">
    <property type="term" value="C:mitochondrion"/>
    <property type="evidence" value="ECO:0006056"/>
    <property type="project" value="FlyBase"/>
</dbReference>
<dbReference type="GO" id="GO:0005634">
    <property type="term" value="C:nucleus"/>
    <property type="evidence" value="ECO:0000314"/>
    <property type="project" value="BHF-UCL"/>
</dbReference>
<dbReference type="GO" id="GO:0031648">
    <property type="term" value="P:protein destabilization"/>
    <property type="evidence" value="ECO:0000315"/>
    <property type="project" value="BHF-UCL"/>
</dbReference>
<dbReference type="CDD" id="cd01012">
    <property type="entry name" value="YcaC_related"/>
    <property type="match status" value="1"/>
</dbReference>
<dbReference type="FunFam" id="3.40.50.850:FF:000001">
    <property type="entry name" value="Isochorismatase domain-containing protein 1"/>
    <property type="match status" value="1"/>
</dbReference>
<dbReference type="Gene3D" id="3.40.50.850">
    <property type="entry name" value="Isochorismatase-like"/>
    <property type="match status" value="1"/>
</dbReference>
<dbReference type="InterPro" id="IPR000868">
    <property type="entry name" value="Isochorismatase-like_dom"/>
</dbReference>
<dbReference type="InterPro" id="IPR036380">
    <property type="entry name" value="Isochorismatase-like_sf"/>
</dbReference>
<dbReference type="InterPro" id="IPR050993">
    <property type="entry name" value="Isochorismatase_domain"/>
</dbReference>
<dbReference type="PANTHER" id="PTHR14119">
    <property type="entry name" value="HYDROLASE"/>
    <property type="match status" value="1"/>
</dbReference>
<dbReference type="PANTHER" id="PTHR14119:SF3">
    <property type="entry name" value="ISOCHORISMATASE DOMAIN-CONTAINING PROTEIN 2"/>
    <property type="match status" value="1"/>
</dbReference>
<dbReference type="Pfam" id="PF00857">
    <property type="entry name" value="Isochorismatase"/>
    <property type="match status" value="1"/>
</dbReference>
<dbReference type="SUPFAM" id="SSF52499">
    <property type="entry name" value="Isochorismatase-like hydrolases"/>
    <property type="match status" value="1"/>
</dbReference>
<name>ISOC2_HUMAN</name>
<protein>
    <recommendedName>
        <fullName>Isochorismatase domain-containing protein 2</fullName>
    </recommendedName>
</protein>
<organism>
    <name type="scientific">Homo sapiens</name>
    <name type="common">Human</name>
    <dbReference type="NCBI Taxonomy" id="9606"/>
    <lineage>
        <taxon>Eukaryota</taxon>
        <taxon>Metazoa</taxon>
        <taxon>Chordata</taxon>
        <taxon>Craniata</taxon>
        <taxon>Vertebrata</taxon>
        <taxon>Euteleostomi</taxon>
        <taxon>Mammalia</taxon>
        <taxon>Eutheria</taxon>
        <taxon>Euarchontoglires</taxon>
        <taxon>Primates</taxon>
        <taxon>Haplorrhini</taxon>
        <taxon>Catarrhini</taxon>
        <taxon>Hominidae</taxon>
        <taxon>Homo</taxon>
    </lineage>
</organism>
<feature type="chain" id="PRO_0000268671" description="Isochorismatase domain-containing protein 2">
    <location>
        <begin position="1"/>
        <end position="205"/>
    </location>
</feature>
<feature type="modified residue" description="Phosphoserine" evidence="5">
    <location>
        <position position="7"/>
    </location>
</feature>
<feature type="modified residue" description="Phosphoserine" evidence="6">
    <location>
        <position position="202"/>
    </location>
</feature>
<feature type="splice variant" id="VSP_038741" description="In isoform 3." evidence="2">
    <location>
        <begin position="47"/>
        <end position="116"/>
    </location>
</feature>
<feature type="splice variant" id="VSP_022000" description="In isoform 2." evidence="2 3">
    <original>L</original>
    <variation>LDPRSYPGLALTSLYPQ</variation>
    <location>
        <position position="116"/>
    </location>
</feature>
<evidence type="ECO:0000269" key="1">
    <source>
    </source>
</evidence>
<evidence type="ECO:0000303" key="2">
    <source>
    </source>
</evidence>
<evidence type="ECO:0000303" key="3">
    <source ref="2"/>
</evidence>
<evidence type="ECO:0000305" key="4"/>
<evidence type="ECO:0007744" key="5">
    <source>
    </source>
</evidence>
<evidence type="ECO:0007744" key="6">
    <source>
    </source>
</evidence>
<keyword id="KW-0025">Alternative splicing</keyword>
<keyword id="KW-0963">Cytoplasm</keyword>
<keyword id="KW-0539">Nucleus</keyword>
<keyword id="KW-0597">Phosphoprotein</keyword>
<keyword id="KW-1267">Proteomics identification</keyword>
<keyword id="KW-1185">Reference proteome</keyword>
<accession>Q96AB3</accession>
<accession>Q6ZN91</accession>
<accession>Q9H5G0</accession>
<reference key="1">
    <citation type="journal article" date="2004" name="Nat. Genet.">
        <title>Complete sequencing and characterization of 21,243 full-length human cDNAs.</title>
        <authorList>
            <person name="Ota T."/>
            <person name="Suzuki Y."/>
            <person name="Nishikawa T."/>
            <person name="Otsuki T."/>
            <person name="Sugiyama T."/>
            <person name="Irie R."/>
            <person name="Wakamatsu A."/>
            <person name="Hayashi K."/>
            <person name="Sato H."/>
            <person name="Nagai K."/>
            <person name="Kimura K."/>
            <person name="Makita H."/>
            <person name="Sekine M."/>
            <person name="Obayashi M."/>
            <person name="Nishi T."/>
            <person name="Shibahara T."/>
            <person name="Tanaka T."/>
            <person name="Ishii S."/>
            <person name="Yamamoto J."/>
            <person name="Saito K."/>
            <person name="Kawai Y."/>
            <person name="Isono Y."/>
            <person name="Nakamura Y."/>
            <person name="Nagahari K."/>
            <person name="Murakami K."/>
            <person name="Yasuda T."/>
            <person name="Iwayanagi T."/>
            <person name="Wagatsuma M."/>
            <person name="Shiratori A."/>
            <person name="Sudo H."/>
            <person name="Hosoiri T."/>
            <person name="Kaku Y."/>
            <person name="Kodaira H."/>
            <person name="Kondo H."/>
            <person name="Sugawara M."/>
            <person name="Takahashi M."/>
            <person name="Kanda K."/>
            <person name="Yokoi T."/>
            <person name="Furuya T."/>
            <person name="Kikkawa E."/>
            <person name="Omura Y."/>
            <person name="Abe K."/>
            <person name="Kamihara K."/>
            <person name="Katsuta N."/>
            <person name="Sato K."/>
            <person name="Tanikawa M."/>
            <person name="Yamazaki M."/>
            <person name="Ninomiya K."/>
            <person name="Ishibashi T."/>
            <person name="Yamashita H."/>
            <person name="Murakawa K."/>
            <person name="Fujimori K."/>
            <person name="Tanai H."/>
            <person name="Kimata M."/>
            <person name="Watanabe M."/>
            <person name="Hiraoka S."/>
            <person name="Chiba Y."/>
            <person name="Ishida S."/>
            <person name="Ono Y."/>
            <person name="Takiguchi S."/>
            <person name="Watanabe S."/>
            <person name="Yosida M."/>
            <person name="Hotuta T."/>
            <person name="Kusano J."/>
            <person name="Kanehori K."/>
            <person name="Takahashi-Fujii A."/>
            <person name="Hara H."/>
            <person name="Tanase T.-O."/>
            <person name="Nomura Y."/>
            <person name="Togiya S."/>
            <person name="Komai F."/>
            <person name="Hara R."/>
            <person name="Takeuchi K."/>
            <person name="Arita M."/>
            <person name="Imose N."/>
            <person name="Musashino K."/>
            <person name="Yuuki H."/>
            <person name="Oshima A."/>
            <person name="Sasaki N."/>
            <person name="Aotsuka S."/>
            <person name="Yoshikawa Y."/>
            <person name="Matsunawa H."/>
            <person name="Ichihara T."/>
            <person name="Shiohata N."/>
            <person name="Sano S."/>
            <person name="Moriya S."/>
            <person name="Momiyama H."/>
            <person name="Satoh N."/>
            <person name="Takami S."/>
            <person name="Terashima Y."/>
            <person name="Suzuki O."/>
            <person name="Nakagawa S."/>
            <person name="Senoh A."/>
            <person name="Mizoguchi H."/>
            <person name="Goto Y."/>
            <person name="Shimizu F."/>
            <person name="Wakebe H."/>
            <person name="Hishigaki H."/>
            <person name="Watanabe T."/>
            <person name="Sugiyama A."/>
            <person name="Takemoto M."/>
            <person name="Kawakami B."/>
            <person name="Yamazaki M."/>
            <person name="Watanabe K."/>
            <person name="Kumagai A."/>
            <person name="Itakura S."/>
            <person name="Fukuzumi Y."/>
            <person name="Fujimori Y."/>
            <person name="Komiyama M."/>
            <person name="Tashiro H."/>
            <person name="Tanigami A."/>
            <person name="Fujiwara T."/>
            <person name="Ono T."/>
            <person name="Yamada K."/>
            <person name="Fujii Y."/>
            <person name="Ozaki K."/>
            <person name="Hirao M."/>
            <person name="Ohmori Y."/>
            <person name="Kawabata A."/>
            <person name="Hikiji T."/>
            <person name="Kobatake N."/>
            <person name="Inagaki H."/>
            <person name="Ikema Y."/>
            <person name="Okamoto S."/>
            <person name="Okitani R."/>
            <person name="Kawakami T."/>
            <person name="Noguchi S."/>
            <person name="Itoh T."/>
            <person name="Shigeta K."/>
            <person name="Senba T."/>
            <person name="Matsumura K."/>
            <person name="Nakajima Y."/>
            <person name="Mizuno T."/>
            <person name="Morinaga M."/>
            <person name="Sasaki M."/>
            <person name="Togashi T."/>
            <person name="Oyama M."/>
            <person name="Hata H."/>
            <person name="Watanabe M."/>
            <person name="Komatsu T."/>
            <person name="Mizushima-Sugano J."/>
            <person name="Satoh T."/>
            <person name="Shirai Y."/>
            <person name="Takahashi Y."/>
            <person name="Nakagawa K."/>
            <person name="Okumura K."/>
            <person name="Nagase T."/>
            <person name="Nomura N."/>
            <person name="Kikuchi H."/>
            <person name="Masuho Y."/>
            <person name="Yamashita R."/>
            <person name="Nakai K."/>
            <person name="Yada T."/>
            <person name="Nakamura Y."/>
            <person name="Ohara O."/>
            <person name="Isogai T."/>
            <person name="Sugano S."/>
        </authorList>
    </citation>
    <scope>NUCLEOTIDE SEQUENCE [LARGE SCALE MRNA] (ISOFORMS 2 AND 3)</scope>
    <source>
        <tissue>Small intestine</tissue>
        <tissue>Stomach</tissue>
    </source>
</reference>
<reference key="2">
    <citation type="submission" date="2004-06" db="EMBL/GenBank/DDBJ databases">
        <title>Cloning of human full open reading frames in Gateway(TM) system entry vector (pDONR201).</title>
        <authorList>
            <person name="Ebert L."/>
            <person name="Schick M."/>
            <person name="Neubert P."/>
            <person name="Schatten R."/>
            <person name="Henze S."/>
            <person name="Korn B."/>
        </authorList>
    </citation>
    <scope>NUCLEOTIDE SEQUENCE [LARGE SCALE MRNA] (ISOFORM 2)</scope>
</reference>
<reference key="3">
    <citation type="submission" date="2005-07" db="EMBL/GenBank/DDBJ databases">
        <authorList>
            <person name="Mural R.J."/>
            <person name="Istrail S."/>
            <person name="Sutton G.G."/>
            <person name="Florea L."/>
            <person name="Halpern A.L."/>
            <person name="Mobarry C.M."/>
            <person name="Lippert R."/>
            <person name="Walenz B."/>
            <person name="Shatkay H."/>
            <person name="Dew I."/>
            <person name="Miller J.R."/>
            <person name="Flanigan M.J."/>
            <person name="Edwards N.J."/>
            <person name="Bolanos R."/>
            <person name="Fasulo D."/>
            <person name="Halldorsson B.V."/>
            <person name="Hannenhalli S."/>
            <person name="Turner R."/>
            <person name="Yooseph S."/>
            <person name="Lu F."/>
            <person name="Nusskern D.R."/>
            <person name="Shue B.C."/>
            <person name="Zheng X.H."/>
            <person name="Zhong F."/>
            <person name="Delcher A.L."/>
            <person name="Huson D.H."/>
            <person name="Kravitz S.A."/>
            <person name="Mouchard L."/>
            <person name="Reinert K."/>
            <person name="Remington K.A."/>
            <person name="Clark A.G."/>
            <person name="Waterman M.S."/>
            <person name="Eichler E.E."/>
            <person name="Adams M.D."/>
            <person name="Hunkapiller M.W."/>
            <person name="Myers E.W."/>
            <person name="Venter J.C."/>
        </authorList>
    </citation>
    <scope>NUCLEOTIDE SEQUENCE [LARGE SCALE GENOMIC DNA]</scope>
</reference>
<reference key="4">
    <citation type="journal article" date="2004" name="Genome Res.">
        <title>The status, quality, and expansion of the NIH full-length cDNA project: the Mammalian Gene Collection (MGC).</title>
        <authorList>
            <consortium name="The MGC Project Team"/>
        </authorList>
    </citation>
    <scope>NUCLEOTIDE SEQUENCE [LARGE SCALE MRNA] (ISOFORM 1)</scope>
    <source>
        <tissue>Brain</tissue>
    </source>
</reference>
<reference key="5">
    <citation type="journal article" date="2007" name="Biochem. Biophys. Res. Commun.">
        <title>Identification and characterization of a novel protein ISOC2 that interacts with p16INK4a.</title>
        <authorList>
            <person name="Huang X."/>
            <person name="Shi Z."/>
            <person name="Wang W."/>
            <person name="Bai J."/>
            <person name="Chen Z."/>
            <person name="Xu J."/>
            <person name="Zhang D."/>
            <person name="Fu S."/>
        </authorList>
    </citation>
    <scope>INTERACTION WITH CDKN2A</scope>
    <scope>SUBCELLULAR LOCATION</scope>
</reference>
<reference key="6">
    <citation type="journal article" date="2008" name="Mol. Cell">
        <title>Kinase-selective enrichment enables quantitative phosphoproteomics of the kinome across the cell cycle.</title>
        <authorList>
            <person name="Daub H."/>
            <person name="Olsen J.V."/>
            <person name="Bairlein M."/>
            <person name="Gnad F."/>
            <person name="Oppermann F.S."/>
            <person name="Korner R."/>
            <person name="Greff Z."/>
            <person name="Keri G."/>
            <person name="Stemmann O."/>
            <person name="Mann M."/>
        </authorList>
    </citation>
    <scope>PHOSPHORYLATION [LARGE SCALE ANALYSIS] AT SER-7</scope>
    <scope>IDENTIFICATION BY MASS SPECTROMETRY [LARGE SCALE ANALYSIS]</scope>
    <source>
        <tissue>Cervix carcinoma</tissue>
    </source>
</reference>
<reference key="7">
    <citation type="journal article" date="2011" name="BMC Syst. Biol.">
        <title>Initial characterization of the human central proteome.</title>
        <authorList>
            <person name="Burkard T.R."/>
            <person name="Planyavsky M."/>
            <person name="Kaupe I."/>
            <person name="Breitwieser F.P."/>
            <person name="Buerckstuemmer T."/>
            <person name="Bennett K.L."/>
            <person name="Superti-Furga G."/>
            <person name="Colinge J."/>
        </authorList>
    </citation>
    <scope>IDENTIFICATION BY MASS SPECTROMETRY [LARGE SCALE ANALYSIS]</scope>
</reference>
<reference key="8">
    <citation type="journal article" date="2014" name="J. Proteomics">
        <title>An enzyme assisted RP-RPLC approach for in-depth analysis of human liver phosphoproteome.</title>
        <authorList>
            <person name="Bian Y."/>
            <person name="Song C."/>
            <person name="Cheng K."/>
            <person name="Dong M."/>
            <person name="Wang F."/>
            <person name="Huang J."/>
            <person name="Sun D."/>
            <person name="Wang L."/>
            <person name="Ye M."/>
            <person name="Zou H."/>
        </authorList>
    </citation>
    <scope>PHOSPHORYLATION [LARGE SCALE ANALYSIS] AT SER-202</scope>
    <scope>IDENTIFICATION BY MASS SPECTROMETRY [LARGE SCALE ANALYSIS]</scope>
    <source>
        <tissue>Liver</tissue>
    </source>
</reference>
<reference key="9">
    <citation type="journal article" date="2015" name="Proteomics">
        <title>N-terminome analysis of the human mitochondrial proteome.</title>
        <authorList>
            <person name="Vaca Jacome A.S."/>
            <person name="Rabilloud T."/>
            <person name="Schaeffer-Reiss C."/>
            <person name="Rompais M."/>
            <person name="Ayoub D."/>
            <person name="Lane L."/>
            <person name="Bairoch A."/>
            <person name="Van Dorsselaer A."/>
            <person name="Carapito C."/>
        </authorList>
    </citation>
    <scope>IDENTIFICATION BY MASS SPECTROMETRY [LARGE SCALE ANALYSIS]</scope>
</reference>
<comment type="subunit">
    <text evidence="1">Interacts with CDKN2A.</text>
</comment>
<comment type="subcellular location">
    <subcellularLocation>
        <location evidence="1">Cytoplasm</location>
    </subcellularLocation>
    <subcellularLocation>
        <location evidence="1">Nucleus</location>
    </subcellularLocation>
    <text>Localizes to the nucleus in the presence of CDKN2A.</text>
</comment>
<comment type="alternative products">
    <event type="alternative splicing"/>
    <isoform>
        <id>Q96AB3-1</id>
        <name>1</name>
        <sequence type="displayed"/>
    </isoform>
    <isoform>
        <id>Q96AB3-2</id>
        <name>2</name>
        <sequence type="described" ref="VSP_022000"/>
    </isoform>
    <isoform>
        <id>Q96AB3-3</id>
        <name>3</name>
        <sequence type="described" ref="VSP_038741"/>
    </isoform>
</comment>
<comment type="similarity">
    <text evidence="4">Belongs to the isochorismatase family.</text>
</comment>
<sequence>MAAARPSLGRVLPGSSVLFLCDMQEKFRHNIAYFPQIVSVAARMLKVARLLEVPVMLTEQYPQGLGPTVPELGTEGLRPLAKTCFSMVPALQQELDSRPQLRSVLLCGIEAQACILNTTLDLLDRGLQVHVVVDACSSRSQVDRLVALARMRQSGAFLSTSEGLILQLVGDAVHPQFKEIQKLIKEPAPDSGLLGLFQGQNSLLH</sequence>